<sequence length="247" mass="27030">MSNQACFSNPGPELWNALGWHPSSEQLEQMIALQALLRQWNARVNLTRLVEGGDYWILQVFDSLWPLQSELQNAQQPRRCIDIGSGGGFPGLVLAIALPGASITLVDSVGRKTAALKAMAAKLGLTSRVTVRSERAELTGQDHCCRGLFDLAMARAVSTAPVVAEYLVPLLKPSGEALLFRGHWSPNDAKDLAKALRFLQADLIKMERRELPDNRGVRHQLRLRATLPCPATFPRPIGVPAKNPLGS</sequence>
<reference key="1">
    <citation type="journal article" date="2007" name="PLoS Genet.">
        <title>Patterns and implications of gene gain and loss in the evolution of Prochlorococcus.</title>
        <authorList>
            <person name="Kettler G.C."/>
            <person name="Martiny A.C."/>
            <person name="Huang K."/>
            <person name="Zucker J."/>
            <person name="Coleman M.L."/>
            <person name="Rodrigue S."/>
            <person name="Chen F."/>
            <person name="Lapidus A."/>
            <person name="Ferriera S."/>
            <person name="Johnson J."/>
            <person name="Steglich C."/>
            <person name="Church G.M."/>
            <person name="Richardson P."/>
            <person name="Chisholm S.W."/>
        </authorList>
    </citation>
    <scope>NUCLEOTIDE SEQUENCE [LARGE SCALE GENOMIC DNA]</scope>
    <source>
        <strain>MIT 9303</strain>
    </source>
</reference>
<dbReference type="EC" id="2.1.1.-" evidence="1"/>
<dbReference type="EMBL" id="CP000554">
    <property type="protein sequence ID" value="ABM77202.1"/>
    <property type="molecule type" value="Genomic_DNA"/>
</dbReference>
<dbReference type="RefSeq" id="WP_011825126.1">
    <property type="nucleotide sequence ID" value="NC_008820.1"/>
</dbReference>
<dbReference type="SMR" id="A2C6U2"/>
<dbReference type="STRING" id="59922.P9303_04501"/>
<dbReference type="KEGG" id="pmf:P9303_04501"/>
<dbReference type="HOGENOM" id="CLU_065341_0_2_3"/>
<dbReference type="BioCyc" id="PMAR59922:G1G80-416-MONOMER"/>
<dbReference type="Proteomes" id="UP000002274">
    <property type="component" value="Chromosome"/>
</dbReference>
<dbReference type="GO" id="GO:0005829">
    <property type="term" value="C:cytosol"/>
    <property type="evidence" value="ECO:0007669"/>
    <property type="project" value="TreeGrafter"/>
</dbReference>
<dbReference type="GO" id="GO:0070043">
    <property type="term" value="F:rRNA (guanine-N7-)-methyltransferase activity"/>
    <property type="evidence" value="ECO:0007669"/>
    <property type="project" value="UniProtKB-UniRule"/>
</dbReference>
<dbReference type="Gene3D" id="3.40.50.150">
    <property type="entry name" value="Vaccinia Virus protein VP39"/>
    <property type="match status" value="1"/>
</dbReference>
<dbReference type="HAMAP" id="MF_00074">
    <property type="entry name" value="16SrRNA_methyltr_G"/>
    <property type="match status" value="1"/>
</dbReference>
<dbReference type="InterPro" id="IPR003682">
    <property type="entry name" value="rRNA_ssu_MeTfrase_G"/>
</dbReference>
<dbReference type="InterPro" id="IPR029063">
    <property type="entry name" value="SAM-dependent_MTases_sf"/>
</dbReference>
<dbReference type="NCBIfam" id="TIGR00138">
    <property type="entry name" value="rsmG_gidB"/>
    <property type="match status" value="1"/>
</dbReference>
<dbReference type="PANTHER" id="PTHR31760">
    <property type="entry name" value="S-ADENOSYL-L-METHIONINE-DEPENDENT METHYLTRANSFERASES SUPERFAMILY PROTEIN"/>
    <property type="match status" value="1"/>
</dbReference>
<dbReference type="PANTHER" id="PTHR31760:SF0">
    <property type="entry name" value="S-ADENOSYL-L-METHIONINE-DEPENDENT METHYLTRANSFERASES SUPERFAMILY PROTEIN"/>
    <property type="match status" value="1"/>
</dbReference>
<dbReference type="Pfam" id="PF02527">
    <property type="entry name" value="GidB"/>
    <property type="match status" value="1"/>
</dbReference>
<dbReference type="PIRSF" id="PIRSF003078">
    <property type="entry name" value="GidB"/>
    <property type="match status" value="1"/>
</dbReference>
<dbReference type="SUPFAM" id="SSF53335">
    <property type="entry name" value="S-adenosyl-L-methionine-dependent methyltransferases"/>
    <property type="match status" value="1"/>
</dbReference>
<accession>A2C6U2</accession>
<name>RSMG_PROM3</name>
<gene>
    <name evidence="1" type="primary">rsmG</name>
    <name type="ordered locus">P9303_04501</name>
</gene>
<organism>
    <name type="scientific">Prochlorococcus marinus (strain MIT 9303)</name>
    <dbReference type="NCBI Taxonomy" id="59922"/>
    <lineage>
        <taxon>Bacteria</taxon>
        <taxon>Bacillati</taxon>
        <taxon>Cyanobacteriota</taxon>
        <taxon>Cyanophyceae</taxon>
        <taxon>Synechococcales</taxon>
        <taxon>Prochlorococcaceae</taxon>
        <taxon>Prochlorococcus</taxon>
    </lineage>
</organism>
<keyword id="KW-0963">Cytoplasm</keyword>
<keyword id="KW-0489">Methyltransferase</keyword>
<keyword id="KW-0698">rRNA processing</keyword>
<keyword id="KW-0949">S-adenosyl-L-methionine</keyword>
<keyword id="KW-0808">Transferase</keyword>
<evidence type="ECO:0000255" key="1">
    <source>
        <dbReference type="HAMAP-Rule" id="MF_00074"/>
    </source>
</evidence>
<comment type="function">
    <text evidence="1">Specifically methylates the N7 position of a guanine in 16S rRNA.</text>
</comment>
<comment type="subcellular location">
    <subcellularLocation>
        <location evidence="1">Cytoplasm</location>
    </subcellularLocation>
</comment>
<comment type="similarity">
    <text evidence="1">Belongs to the methyltransferase superfamily. RNA methyltransferase RsmG family.</text>
</comment>
<proteinExistence type="inferred from homology"/>
<protein>
    <recommendedName>
        <fullName evidence="1">Ribosomal RNA small subunit methyltransferase G</fullName>
        <ecNumber evidence="1">2.1.1.-</ecNumber>
    </recommendedName>
    <alternativeName>
        <fullName evidence="1">16S rRNA 7-methylguanosine methyltransferase</fullName>
        <shortName evidence="1">16S rRNA m7G methyltransferase</shortName>
    </alternativeName>
</protein>
<feature type="chain" id="PRO_0000335398" description="Ribosomal RNA small subunit methyltransferase G">
    <location>
        <begin position="1"/>
        <end position="247"/>
    </location>
</feature>
<feature type="binding site" evidence="1">
    <location>
        <position position="84"/>
    </location>
    <ligand>
        <name>S-adenosyl-L-methionine</name>
        <dbReference type="ChEBI" id="CHEBI:59789"/>
    </ligand>
</feature>
<feature type="binding site" evidence="1">
    <location>
        <position position="89"/>
    </location>
    <ligand>
        <name>S-adenosyl-L-methionine</name>
        <dbReference type="ChEBI" id="CHEBI:59789"/>
    </ligand>
</feature>
<feature type="binding site" evidence="1">
    <location>
        <begin position="136"/>
        <end position="137"/>
    </location>
    <ligand>
        <name>S-adenosyl-L-methionine</name>
        <dbReference type="ChEBI" id="CHEBI:59789"/>
    </ligand>
</feature>
<feature type="binding site" evidence="1">
    <location>
        <position position="155"/>
    </location>
    <ligand>
        <name>S-adenosyl-L-methionine</name>
        <dbReference type="ChEBI" id="CHEBI:59789"/>
    </ligand>
</feature>